<name>RNC_SHESW</name>
<organism>
    <name type="scientific">Shewanella sp. (strain W3-18-1)</name>
    <dbReference type="NCBI Taxonomy" id="351745"/>
    <lineage>
        <taxon>Bacteria</taxon>
        <taxon>Pseudomonadati</taxon>
        <taxon>Pseudomonadota</taxon>
        <taxon>Gammaproteobacteria</taxon>
        <taxon>Alteromonadales</taxon>
        <taxon>Shewanellaceae</taxon>
        <taxon>Shewanella</taxon>
    </lineage>
</organism>
<feature type="chain" id="PRO_1000075821" description="Ribonuclease 3">
    <location>
        <begin position="1"/>
        <end position="226"/>
    </location>
</feature>
<feature type="domain" description="RNase III" evidence="1">
    <location>
        <begin position="7"/>
        <end position="129"/>
    </location>
</feature>
<feature type="domain" description="DRBM" evidence="1">
    <location>
        <begin position="156"/>
        <end position="226"/>
    </location>
</feature>
<feature type="active site" evidence="1">
    <location>
        <position position="46"/>
    </location>
</feature>
<feature type="active site" evidence="1">
    <location>
        <position position="118"/>
    </location>
</feature>
<feature type="binding site" evidence="1">
    <location>
        <position position="42"/>
    </location>
    <ligand>
        <name>Mg(2+)</name>
        <dbReference type="ChEBI" id="CHEBI:18420"/>
    </ligand>
</feature>
<feature type="binding site" evidence="1">
    <location>
        <position position="115"/>
    </location>
    <ligand>
        <name>Mg(2+)</name>
        <dbReference type="ChEBI" id="CHEBI:18420"/>
    </ligand>
</feature>
<feature type="binding site" evidence="1">
    <location>
        <position position="118"/>
    </location>
    <ligand>
        <name>Mg(2+)</name>
        <dbReference type="ChEBI" id="CHEBI:18420"/>
    </ligand>
</feature>
<comment type="function">
    <text evidence="1">Digests double-stranded RNA. Involved in the processing of primary rRNA transcript to yield the immediate precursors to the large and small rRNAs (23S and 16S). Processes some mRNAs, and tRNAs when they are encoded in the rRNA operon. Processes pre-crRNA and tracrRNA of type II CRISPR loci if present in the organism.</text>
</comment>
<comment type="catalytic activity">
    <reaction evidence="1">
        <text>Endonucleolytic cleavage to 5'-phosphomonoester.</text>
        <dbReference type="EC" id="3.1.26.3"/>
    </reaction>
</comment>
<comment type="cofactor">
    <cofactor evidence="1">
        <name>Mg(2+)</name>
        <dbReference type="ChEBI" id="CHEBI:18420"/>
    </cofactor>
</comment>
<comment type="subunit">
    <text evidence="1">Homodimer.</text>
</comment>
<comment type="subcellular location">
    <subcellularLocation>
        <location evidence="1">Cytoplasm</location>
    </subcellularLocation>
</comment>
<comment type="similarity">
    <text evidence="1">Belongs to the ribonuclease III family.</text>
</comment>
<evidence type="ECO:0000255" key="1">
    <source>
        <dbReference type="HAMAP-Rule" id="MF_00104"/>
    </source>
</evidence>
<proteinExistence type="inferred from homology"/>
<accession>A1RMC7</accession>
<gene>
    <name evidence="1" type="primary">rnc</name>
    <name type="ordered locus">Sputw3181_3005</name>
</gene>
<reference key="1">
    <citation type="submission" date="2006-12" db="EMBL/GenBank/DDBJ databases">
        <title>Complete sequence of Shewanella sp. W3-18-1.</title>
        <authorList>
            <consortium name="US DOE Joint Genome Institute"/>
            <person name="Copeland A."/>
            <person name="Lucas S."/>
            <person name="Lapidus A."/>
            <person name="Barry K."/>
            <person name="Detter J.C."/>
            <person name="Glavina del Rio T."/>
            <person name="Hammon N."/>
            <person name="Israni S."/>
            <person name="Dalin E."/>
            <person name="Tice H."/>
            <person name="Pitluck S."/>
            <person name="Chain P."/>
            <person name="Malfatti S."/>
            <person name="Shin M."/>
            <person name="Vergez L."/>
            <person name="Schmutz J."/>
            <person name="Larimer F."/>
            <person name="Land M."/>
            <person name="Hauser L."/>
            <person name="Kyrpides N."/>
            <person name="Lykidis A."/>
            <person name="Tiedje J."/>
            <person name="Richardson P."/>
        </authorList>
    </citation>
    <scope>NUCLEOTIDE SEQUENCE [LARGE SCALE GENOMIC DNA]</scope>
    <source>
        <strain>W3-18-1</strain>
    </source>
</reference>
<sequence length="226" mass="25332">MEPIKNLPRLCRTLGYEFTQIELLTQALTHRSAANKHNERLEFLGDSILSIVISDALYHQFPKATEGDLSRMRATLVRGDTLTIIAQEFKLGDYLYLGPGELKSGGFRRESILADAVEAIIGAIYLDSDLEVCRKLLLTWYAERLAEIQPGVSQKDAKTLLQEYLQGLKKPLPDYQVINIEGDAHDQTFTVECRIEDLSQSVIGVASSRRKAEQIAAAQVLELLKK</sequence>
<keyword id="KW-0963">Cytoplasm</keyword>
<keyword id="KW-0255">Endonuclease</keyword>
<keyword id="KW-0378">Hydrolase</keyword>
<keyword id="KW-0460">Magnesium</keyword>
<keyword id="KW-0479">Metal-binding</keyword>
<keyword id="KW-0507">mRNA processing</keyword>
<keyword id="KW-0540">Nuclease</keyword>
<keyword id="KW-0694">RNA-binding</keyword>
<keyword id="KW-0698">rRNA processing</keyword>
<keyword id="KW-0699">rRNA-binding</keyword>
<keyword id="KW-0819">tRNA processing</keyword>
<protein>
    <recommendedName>
        <fullName evidence="1">Ribonuclease 3</fullName>
        <ecNumber evidence="1">3.1.26.3</ecNumber>
    </recommendedName>
    <alternativeName>
        <fullName evidence="1">Ribonuclease III</fullName>
        <shortName evidence="1">RNase III</shortName>
    </alternativeName>
</protein>
<dbReference type="EC" id="3.1.26.3" evidence="1"/>
<dbReference type="EMBL" id="CP000503">
    <property type="protein sequence ID" value="ABM25822.1"/>
    <property type="molecule type" value="Genomic_DNA"/>
</dbReference>
<dbReference type="RefSeq" id="WP_011790274.1">
    <property type="nucleotide sequence ID" value="NC_008750.1"/>
</dbReference>
<dbReference type="SMR" id="A1RMC7"/>
<dbReference type="GeneID" id="67442675"/>
<dbReference type="KEGG" id="shw:Sputw3181_3005"/>
<dbReference type="HOGENOM" id="CLU_000907_1_1_6"/>
<dbReference type="Proteomes" id="UP000002597">
    <property type="component" value="Chromosome"/>
</dbReference>
<dbReference type="GO" id="GO:0005737">
    <property type="term" value="C:cytoplasm"/>
    <property type="evidence" value="ECO:0007669"/>
    <property type="project" value="UniProtKB-SubCell"/>
</dbReference>
<dbReference type="GO" id="GO:0003725">
    <property type="term" value="F:double-stranded RNA binding"/>
    <property type="evidence" value="ECO:0007669"/>
    <property type="project" value="TreeGrafter"/>
</dbReference>
<dbReference type="GO" id="GO:0046872">
    <property type="term" value="F:metal ion binding"/>
    <property type="evidence" value="ECO:0007669"/>
    <property type="project" value="UniProtKB-KW"/>
</dbReference>
<dbReference type="GO" id="GO:0004525">
    <property type="term" value="F:ribonuclease III activity"/>
    <property type="evidence" value="ECO:0007669"/>
    <property type="project" value="UniProtKB-UniRule"/>
</dbReference>
<dbReference type="GO" id="GO:0019843">
    <property type="term" value="F:rRNA binding"/>
    <property type="evidence" value="ECO:0007669"/>
    <property type="project" value="UniProtKB-KW"/>
</dbReference>
<dbReference type="GO" id="GO:0006397">
    <property type="term" value="P:mRNA processing"/>
    <property type="evidence" value="ECO:0007669"/>
    <property type="project" value="UniProtKB-UniRule"/>
</dbReference>
<dbReference type="GO" id="GO:0010468">
    <property type="term" value="P:regulation of gene expression"/>
    <property type="evidence" value="ECO:0007669"/>
    <property type="project" value="TreeGrafter"/>
</dbReference>
<dbReference type="GO" id="GO:0006364">
    <property type="term" value="P:rRNA processing"/>
    <property type="evidence" value="ECO:0007669"/>
    <property type="project" value="UniProtKB-UniRule"/>
</dbReference>
<dbReference type="GO" id="GO:0008033">
    <property type="term" value="P:tRNA processing"/>
    <property type="evidence" value="ECO:0007669"/>
    <property type="project" value="UniProtKB-KW"/>
</dbReference>
<dbReference type="CDD" id="cd10845">
    <property type="entry name" value="DSRM_RNAse_III_family"/>
    <property type="match status" value="1"/>
</dbReference>
<dbReference type="CDD" id="cd00593">
    <property type="entry name" value="RIBOc"/>
    <property type="match status" value="1"/>
</dbReference>
<dbReference type="FunFam" id="1.10.1520.10:FF:000001">
    <property type="entry name" value="Ribonuclease 3"/>
    <property type="match status" value="1"/>
</dbReference>
<dbReference type="FunFam" id="3.30.160.20:FF:000003">
    <property type="entry name" value="Ribonuclease 3"/>
    <property type="match status" value="1"/>
</dbReference>
<dbReference type="Gene3D" id="3.30.160.20">
    <property type="match status" value="1"/>
</dbReference>
<dbReference type="Gene3D" id="1.10.1520.10">
    <property type="entry name" value="Ribonuclease III domain"/>
    <property type="match status" value="1"/>
</dbReference>
<dbReference type="HAMAP" id="MF_00104">
    <property type="entry name" value="RNase_III"/>
    <property type="match status" value="1"/>
</dbReference>
<dbReference type="InterPro" id="IPR014720">
    <property type="entry name" value="dsRBD_dom"/>
</dbReference>
<dbReference type="InterPro" id="IPR011907">
    <property type="entry name" value="RNase_III"/>
</dbReference>
<dbReference type="InterPro" id="IPR000999">
    <property type="entry name" value="RNase_III_dom"/>
</dbReference>
<dbReference type="InterPro" id="IPR036389">
    <property type="entry name" value="RNase_III_sf"/>
</dbReference>
<dbReference type="NCBIfam" id="TIGR02191">
    <property type="entry name" value="RNaseIII"/>
    <property type="match status" value="1"/>
</dbReference>
<dbReference type="PANTHER" id="PTHR11207:SF0">
    <property type="entry name" value="RIBONUCLEASE 3"/>
    <property type="match status" value="1"/>
</dbReference>
<dbReference type="PANTHER" id="PTHR11207">
    <property type="entry name" value="RIBONUCLEASE III"/>
    <property type="match status" value="1"/>
</dbReference>
<dbReference type="Pfam" id="PF00035">
    <property type="entry name" value="dsrm"/>
    <property type="match status" value="1"/>
</dbReference>
<dbReference type="Pfam" id="PF14622">
    <property type="entry name" value="Ribonucleas_3_3"/>
    <property type="match status" value="1"/>
</dbReference>
<dbReference type="SMART" id="SM00358">
    <property type="entry name" value="DSRM"/>
    <property type="match status" value="1"/>
</dbReference>
<dbReference type="SMART" id="SM00535">
    <property type="entry name" value="RIBOc"/>
    <property type="match status" value="1"/>
</dbReference>
<dbReference type="SUPFAM" id="SSF54768">
    <property type="entry name" value="dsRNA-binding domain-like"/>
    <property type="match status" value="1"/>
</dbReference>
<dbReference type="SUPFAM" id="SSF69065">
    <property type="entry name" value="RNase III domain-like"/>
    <property type="match status" value="1"/>
</dbReference>
<dbReference type="PROSITE" id="PS50137">
    <property type="entry name" value="DS_RBD"/>
    <property type="match status" value="1"/>
</dbReference>
<dbReference type="PROSITE" id="PS00517">
    <property type="entry name" value="RNASE_3_1"/>
    <property type="match status" value="1"/>
</dbReference>
<dbReference type="PROSITE" id="PS50142">
    <property type="entry name" value="RNASE_3_2"/>
    <property type="match status" value="1"/>
</dbReference>